<gene>
    <name type="ordered locus">Bamb_0068</name>
</gene>
<feature type="chain" id="PRO_1000050411" description="Putative pterin-4-alpha-carbinolamine dehydratase">
    <location>
        <begin position="1"/>
        <end position="102"/>
    </location>
</feature>
<proteinExistence type="inferred from homology"/>
<accession>Q0BJP4</accession>
<name>PHS_BURCM</name>
<protein>
    <recommendedName>
        <fullName evidence="1">Putative pterin-4-alpha-carbinolamine dehydratase</fullName>
        <shortName evidence="1">PHS</shortName>
        <ecNumber evidence="1">4.2.1.96</ecNumber>
    </recommendedName>
    <alternativeName>
        <fullName evidence="1">4-alpha-hydroxy-tetrahydropterin dehydratase</fullName>
    </alternativeName>
    <alternativeName>
        <fullName evidence="1">Pterin carbinolamine dehydratase</fullName>
        <shortName evidence="1">PCD</shortName>
    </alternativeName>
</protein>
<comment type="catalytic activity">
    <reaction evidence="1">
        <text>(4aS,6R)-4a-hydroxy-L-erythro-5,6,7,8-tetrahydrobiopterin = (6R)-L-erythro-6,7-dihydrobiopterin + H2O</text>
        <dbReference type="Rhea" id="RHEA:11920"/>
        <dbReference type="ChEBI" id="CHEBI:15377"/>
        <dbReference type="ChEBI" id="CHEBI:15642"/>
        <dbReference type="ChEBI" id="CHEBI:43120"/>
        <dbReference type="EC" id="4.2.1.96"/>
    </reaction>
</comment>
<comment type="similarity">
    <text evidence="1">Belongs to the pterin-4-alpha-carbinolamine dehydratase family.</text>
</comment>
<organism>
    <name type="scientific">Burkholderia ambifaria (strain ATCC BAA-244 / DSM 16087 / CCUG 44356 / LMG 19182 / AMMD)</name>
    <name type="common">Burkholderia cepacia (strain AMMD)</name>
    <dbReference type="NCBI Taxonomy" id="339670"/>
    <lineage>
        <taxon>Bacteria</taxon>
        <taxon>Pseudomonadati</taxon>
        <taxon>Pseudomonadota</taxon>
        <taxon>Betaproteobacteria</taxon>
        <taxon>Burkholderiales</taxon>
        <taxon>Burkholderiaceae</taxon>
        <taxon>Burkholderia</taxon>
        <taxon>Burkholderia cepacia complex</taxon>
    </lineage>
</organism>
<sequence>MIHKLTSEERKTRLEGLPHWTAVPGRDAIQRSLRFADFNEAFGFMTRIAIKAQEMNHHPEWFNVYNRVDITLSTHDAHGLTERDILLAQFIDHVCAHTQPAA</sequence>
<dbReference type="EC" id="4.2.1.96" evidence="1"/>
<dbReference type="EMBL" id="CP000440">
    <property type="protein sequence ID" value="ABI85629.1"/>
    <property type="molecule type" value="Genomic_DNA"/>
</dbReference>
<dbReference type="RefSeq" id="WP_011655597.1">
    <property type="nucleotide sequence ID" value="NC_008390.1"/>
</dbReference>
<dbReference type="SMR" id="Q0BJP4"/>
<dbReference type="GeneID" id="93084522"/>
<dbReference type="KEGG" id="bam:Bamb_0068"/>
<dbReference type="PATRIC" id="fig|339670.21.peg.1566"/>
<dbReference type="eggNOG" id="COG2154">
    <property type="taxonomic scope" value="Bacteria"/>
</dbReference>
<dbReference type="Proteomes" id="UP000000662">
    <property type="component" value="Chromosome 1"/>
</dbReference>
<dbReference type="GO" id="GO:0008124">
    <property type="term" value="F:4-alpha-hydroxytetrahydrobiopterin dehydratase activity"/>
    <property type="evidence" value="ECO:0007669"/>
    <property type="project" value="UniProtKB-UniRule"/>
</dbReference>
<dbReference type="GO" id="GO:0006729">
    <property type="term" value="P:tetrahydrobiopterin biosynthetic process"/>
    <property type="evidence" value="ECO:0007669"/>
    <property type="project" value="InterPro"/>
</dbReference>
<dbReference type="CDD" id="cd00914">
    <property type="entry name" value="PCD_DCoH_subfamily_b"/>
    <property type="match status" value="1"/>
</dbReference>
<dbReference type="Gene3D" id="3.30.1360.20">
    <property type="entry name" value="Transcriptional coactivator/pterin dehydratase"/>
    <property type="match status" value="1"/>
</dbReference>
<dbReference type="HAMAP" id="MF_00434">
    <property type="entry name" value="Pterin_4_alpha"/>
    <property type="match status" value="1"/>
</dbReference>
<dbReference type="InterPro" id="IPR036428">
    <property type="entry name" value="PCD_sf"/>
</dbReference>
<dbReference type="InterPro" id="IPR001533">
    <property type="entry name" value="Pterin_deHydtase"/>
</dbReference>
<dbReference type="NCBIfam" id="NF002018">
    <property type="entry name" value="PRK00823.1-3"/>
    <property type="match status" value="1"/>
</dbReference>
<dbReference type="NCBIfam" id="NF002020">
    <property type="entry name" value="PRK00823.1-5"/>
    <property type="match status" value="1"/>
</dbReference>
<dbReference type="PANTHER" id="PTHR12599">
    <property type="entry name" value="PTERIN-4-ALPHA-CARBINOLAMINE DEHYDRATASE"/>
    <property type="match status" value="1"/>
</dbReference>
<dbReference type="PANTHER" id="PTHR12599:SF0">
    <property type="entry name" value="PTERIN-4-ALPHA-CARBINOLAMINE DEHYDRATASE"/>
    <property type="match status" value="1"/>
</dbReference>
<dbReference type="Pfam" id="PF01329">
    <property type="entry name" value="Pterin_4a"/>
    <property type="match status" value="1"/>
</dbReference>
<dbReference type="SUPFAM" id="SSF55248">
    <property type="entry name" value="PCD-like"/>
    <property type="match status" value="1"/>
</dbReference>
<evidence type="ECO:0000255" key="1">
    <source>
        <dbReference type="HAMAP-Rule" id="MF_00434"/>
    </source>
</evidence>
<reference key="1">
    <citation type="submission" date="2006-08" db="EMBL/GenBank/DDBJ databases">
        <title>Complete sequence of chromosome 1 of Burkholderia cepacia AMMD.</title>
        <authorList>
            <person name="Copeland A."/>
            <person name="Lucas S."/>
            <person name="Lapidus A."/>
            <person name="Barry K."/>
            <person name="Detter J.C."/>
            <person name="Glavina del Rio T."/>
            <person name="Hammon N."/>
            <person name="Israni S."/>
            <person name="Pitluck S."/>
            <person name="Bruce D."/>
            <person name="Chain P."/>
            <person name="Malfatti S."/>
            <person name="Shin M."/>
            <person name="Vergez L."/>
            <person name="Schmutz J."/>
            <person name="Larimer F."/>
            <person name="Land M."/>
            <person name="Hauser L."/>
            <person name="Kyrpides N."/>
            <person name="Kim E."/>
            <person name="Parke J."/>
            <person name="Coenye T."/>
            <person name="Konstantinidis K."/>
            <person name="Ramette A."/>
            <person name="Tiedje J."/>
            <person name="Richardson P."/>
        </authorList>
    </citation>
    <scope>NUCLEOTIDE SEQUENCE [LARGE SCALE GENOMIC DNA]</scope>
    <source>
        <strain>ATCC BAA-244 / DSM 16087 / CCUG 44356 / LMG 19182 / AMMD</strain>
    </source>
</reference>
<keyword id="KW-0456">Lyase</keyword>